<keyword id="KW-0687">Ribonucleoprotein</keyword>
<keyword id="KW-0689">Ribosomal protein</keyword>
<keyword id="KW-0694">RNA-binding</keyword>
<keyword id="KW-0699">rRNA-binding</keyword>
<accession>Q97CD8</accession>
<feature type="chain" id="PRO_0000146386" description="Small ribosomal subunit protein uS12">
    <location>
        <begin position="1"/>
        <end position="142"/>
    </location>
</feature>
<evidence type="ECO:0000255" key="1">
    <source>
        <dbReference type="HAMAP-Rule" id="MF_00403"/>
    </source>
</evidence>
<evidence type="ECO:0000305" key="2"/>
<dbReference type="EMBL" id="BA000011">
    <property type="protein sequence ID" value="BAB59306.1"/>
    <property type="molecule type" value="Genomic_DNA"/>
</dbReference>
<dbReference type="RefSeq" id="WP_010916419.1">
    <property type="nucleotide sequence ID" value="NC_002689.2"/>
</dbReference>
<dbReference type="SMR" id="Q97CD8"/>
<dbReference type="STRING" id="273116.gene:9380934"/>
<dbReference type="PaxDb" id="273116-14324378"/>
<dbReference type="GeneID" id="1441649"/>
<dbReference type="KEGG" id="tvo:TVG0173432"/>
<dbReference type="eggNOG" id="arCOG04255">
    <property type="taxonomic scope" value="Archaea"/>
</dbReference>
<dbReference type="HOGENOM" id="CLU_115574_0_1_2"/>
<dbReference type="OrthoDB" id="45154at2157"/>
<dbReference type="PhylomeDB" id="Q97CD8"/>
<dbReference type="Proteomes" id="UP000001017">
    <property type="component" value="Chromosome"/>
</dbReference>
<dbReference type="GO" id="GO:0015935">
    <property type="term" value="C:small ribosomal subunit"/>
    <property type="evidence" value="ECO:0007669"/>
    <property type="project" value="InterPro"/>
</dbReference>
<dbReference type="GO" id="GO:0019843">
    <property type="term" value="F:rRNA binding"/>
    <property type="evidence" value="ECO:0007669"/>
    <property type="project" value="UniProtKB-UniRule"/>
</dbReference>
<dbReference type="GO" id="GO:0003735">
    <property type="term" value="F:structural constituent of ribosome"/>
    <property type="evidence" value="ECO:0007669"/>
    <property type="project" value="InterPro"/>
</dbReference>
<dbReference type="GO" id="GO:0006412">
    <property type="term" value="P:translation"/>
    <property type="evidence" value="ECO:0007669"/>
    <property type="project" value="UniProtKB-UniRule"/>
</dbReference>
<dbReference type="CDD" id="cd03367">
    <property type="entry name" value="Ribosomal_S23"/>
    <property type="match status" value="1"/>
</dbReference>
<dbReference type="FunFam" id="2.40.50.140:FF:000007">
    <property type="entry name" value="40S ribosomal protein S23"/>
    <property type="match status" value="1"/>
</dbReference>
<dbReference type="Gene3D" id="2.40.50.140">
    <property type="entry name" value="Nucleic acid-binding proteins"/>
    <property type="match status" value="1"/>
</dbReference>
<dbReference type="HAMAP" id="MF_00403_A">
    <property type="entry name" value="Ribosomal_uS12_A"/>
    <property type="match status" value="1"/>
</dbReference>
<dbReference type="InterPro" id="IPR012340">
    <property type="entry name" value="NA-bd_OB-fold"/>
</dbReference>
<dbReference type="InterPro" id="IPR006032">
    <property type="entry name" value="Ribosomal_uS12"/>
</dbReference>
<dbReference type="InterPro" id="IPR022863">
    <property type="entry name" value="Ribosomal_uS12_arc"/>
</dbReference>
<dbReference type="InterPro" id="IPR005680">
    <property type="entry name" value="Ribosomal_uS12_euk/arc"/>
</dbReference>
<dbReference type="NCBIfam" id="NF003254">
    <property type="entry name" value="PRK04211.1"/>
    <property type="match status" value="1"/>
</dbReference>
<dbReference type="NCBIfam" id="TIGR00982">
    <property type="entry name" value="uS12_E_A"/>
    <property type="match status" value="1"/>
</dbReference>
<dbReference type="PANTHER" id="PTHR11652">
    <property type="entry name" value="30S RIBOSOMAL PROTEIN S12 FAMILY MEMBER"/>
    <property type="match status" value="1"/>
</dbReference>
<dbReference type="Pfam" id="PF00164">
    <property type="entry name" value="Ribosom_S12_S23"/>
    <property type="match status" value="1"/>
</dbReference>
<dbReference type="PIRSF" id="PIRSF002133">
    <property type="entry name" value="Ribosomal_S12/S23"/>
    <property type="match status" value="1"/>
</dbReference>
<dbReference type="SUPFAM" id="SSF50249">
    <property type="entry name" value="Nucleic acid-binding proteins"/>
    <property type="match status" value="1"/>
</dbReference>
<dbReference type="PROSITE" id="PS00055">
    <property type="entry name" value="RIBOSOMAL_S12"/>
    <property type="match status" value="1"/>
</dbReference>
<organism>
    <name type="scientific">Thermoplasma volcanium (strain ATCC 51530 / DSM 4299 / JCM 9571 / NBRC 15438 / GSS1)</name>
    <dbReference type="NCBI Taxonomy" id="273116"/>
    <lineage>
        <taxon>Archaea</taxon>
        <taxon>Methanobacteriati</taxon>
        <taxon>Thermoplasmatota</taxon>
        <taxon>Thermoplasmata</taxon>
        <taxon>Thermoplasmatales</taxon>
        <taxon>Thermoplasmataceae</taxon>
        <taxon>Thermoplasma</taxon>
    </lineage>
</organism>
<gene>
    <name evidence="1" type="primary">rps12</name>
    <name type="ordered locus">TV0164</name>
    <name type="ORF">TVG0173432</name>
</gene>
<proteinExistence type="inferred from homology"/>
<comment type="function">
    <text evidence="1">With S4 and S5 plays an important role in translational accuracy. Located at the interface of the 30S and 50S subunits.</text>
</comment>
<comment type="subunit">
    <text evidence="1">Part of the 30S ribosomal subunit.</text>
</comment>
<comment type="similarity">
    <text evidence="1">Belongs to the universal ribosomal protein uS12 family.</text>
</comment>
<sequence length="142" mass="15751">MGNGLNAGRKLLENRKKFRWSDRDYKRRVLQLKRKSDPLEGAPQAKGIAIEKVGIEAKQPNSAIRKCVKVQLIKNGRQITAFAVGDGAINYIDEHDEVTVEGIGGRMGRSKGDIPGVRYKVVAVNGISLKELVKGRKEKTVR</sequence>
<name>RS12_THEVO</name>
<protein>
    <recommendedName>
        <fullName evidence="1">Small ribosomal subunit protein uS12</fullName>
    </recommendedName>
    <alternativeName>
        <fullName evidence="2">30S ribosomal protein S12</fullName>
    </alternativeName>
</protein>
<reference key="1">
    <citation type="journal article" date="2000" name="Proc. Natl. Acad. Sci. U.S.A.">
        <title>Archaeal adaptation to higher temperatures revealed by genomic sequence of Thermoplasma volcanium.</title>
        <authorList>
            <person name="Kawashima T."/>
            <person name="Amano N."/>
            <person name="Koike H."/>
            <person name="Makino S."/>
            <person name="Higuchi S."/>
            <person name="Kawashima-Ohya Y."/>
            <person name="Watanabe K."/>
            <person name="Yamazaki M."/>
            <person name="Kanehori K."/>
            <person name="Kawamoto T."/>
            <person name="Nunoshiba T."/>
            <person name="Yamamoto Y."/>
            <person name="Aramaki H."/>
            <person name="Makino K."/>
            <person name="Suzuki M."/>
        </authorList>
    </citation>
    <scope>NUCLEOTIDE SEQUENCE [LARGE SCALE GENOMIC DNA]</scope>
    <source>
        <strain>ATCC 51530 / DSM 4299 / JCM 9571 / NBRC 15438 / GSS1</strain>
    </source>
</reference>